<accession>A2CCB6</accession>
<dbReference type="EC" id="2.1.3.2" evidence="1"/>
<dbReference type="EMBL" id="CP000554">
    <property type="protein sequence ID" value="ABM79126.1"/>
    <property type="molecule type" value="Genomic_DNA"/>
</dbReference>
<dbReference type="RefSeq" id="WP_011826983.1">
    <property type="nucleotide sequence ID" value="NC_008820.1"/>
</dbReference>
<dbReference type="SMR" id="A2CCB6"/>
<dbReference type="STRING" id="59922.P9303_23931"/>
<dbReference type="KEGG" id="pmf:P9303_23931"/>
<dbReference type="HOGENOM" id="CLU_043846_2_0_3"/>
<dbReference type="BioCyc" id="PMAR59922:G1G80-2105-MONOMER"/>
<dbReference type="UniPathway" id="UPA00070">
    <property type="reaction ID" value="UER00116"/>
</dbReference>
<dbReference type="Proteomes" id="UP000002274">
    <property type="component" value="Chromosome"/>
</dbReference>
<dbReference type="GO" id="GO:0005829">
    <property type="term" value="C:cytosol"/>
    <property type="evidence" value="ECO:0007669"/>
    <property type="project" value="TreeGrafter"/>
</dbReference>
<dbReference type="GO" id="GO:0016597">
    <property type="term" value="F:amino acid binding"/>
    <property type="evidence" value="ECO:0007669"/>
    <property type="project" value="InterPro"/>
</dbReference>
<dbReference type="GO" id="GO:0004070">
    <property type="term" value="F:aspartate carbamoyltransferase activity"/>
    <property type="evidence" value="ECO:0007669"/>
    <property type="project" value="UniProtKB-UniRule"/>
</dbReference>
<dbReference type="GO" id="GO:0006207">
    <property type="term" value="P:'de novo' pyrimidine nucleobase biosynthetic process"/>
    <property type="evidence" value="ECO:0007669"/>
    <property type="project" value="InterPro"/>
</dbReference>
<dbReference type="GO" id="GO:0044205">
    <property type="term" value="P:'de novo' UMP biosynthetic process"/>
    <property type="evidence" value="ECO:0007669"/>
    <property type="project" value="UniProtKB-UniRule"/>
</dbReference>
<dbReference type="GO" id="GO:0006520">
    <property type="term" value="P:amino acid metabolic process"/>
    <property type="evidence" value="ECO:0007669"/>
    <property type="project" value="InterPro"/>
</dbReference>
<dbReference type="Gene3D" id="3.40.50.1370">
    <property type="entry name" value="Aspartate/ornithine carbamoyltransferase"/>
    <property type="match status" value="2"/>
</dbReference>
<dbReference type="HAMAP" id="MF_00001">
    <property type="entry name" value="Asp_carb_tr"/>
    <property type="match status" value="1"/>
</dbReference>
<dbReference type="InterPro" id="IPR006132">
    <property type="entry name" value="Asp/Orn_carbamoyltranf_P-bd"/>
</dbReference>
<dbReference type="InterPro" id="IPR006130">
    <property type="entry name" value="Asp/Orn_carbamoylTrfase"/>
</dbReference>
<dbReference type="InterPro" id="IPR036901">
    <property type="entry name" value="Asp/Orn_carbamoylTrfase_sf"/>
</dbReference>
<dbReference type="InterPro" id="IPR002082">
    <property type="entry name" value="Asp_carbamoyltransf"/>
</dbReference>
<dbReference type="InterPro" id="IPR006131">
    <property type="entry name" value="Asp_carbamoyltransf_Asp/Orn-bd"/>
</dbReference>
<dbReference type="NCBIfam" id="TIGR00670">
    <property type="entry name" value="asp_carb_tr"/>
    <property type="match status" value="1"/>
</dbReference>
<dbReference type="NCBIfam" id="NF002032">
    <property type="entry name" value="PRK00856.1"/>
    <property type="match status" value="1"/>
</dbReference>
<dbReference type="PANTHER" id="PTHR45753:SF6">
    <property type="entry name" value="ASPARTATE CARBAMOYLTRANSFERASE"/>
    <property type="match status" value="1"/>
</dbReference>
<dbReference type="PANTHER" id="PTHR45753">
    <property type="entry name" value="ORNITHINE CARBAMOYLTRANSFERASE, MITOCHONDRIAL"/>
    <property type="match status" value="1"/>
</dbReference>
<dbReference type="Pfam" id="PF00185">
    <property type="entry name" value="OTCace"/>
    <property type="match status" value="1"/>
</dbReference>
<dbReference type="Pfam" id="PF02729">
    <property type="entry name" value="OTCace_N"/>
    <property type="match status" value="1"/>
</dbReference>
<dbReference type="PRINTS" id="PR00100">
    <property type="entry name" value="AOTCASE"/>
</dbReference>
<dbReference type="PRINTS" id="PR00101">
    <property type="entry name" value="ATCASE"/>
</dbReference>
<dbReference type="SUPFAM" id="SSF53671">
    <property type="entry name" value="Aspartate/ornithine carbamoyltransferase"/>
    <property type="match status" value="1"/>
</dbReference>
<dbReference type="PROSITE" id="PS00097">
    <property type="entry name" value="CARBAMOYLTRANSFERASE"/>
    <property type="match status" value="1"/>
</dbReference>
<comment type="function">
    <text evidence="1">Catalyzes the condensation of carbamoyl phosphate and aspartate to form carbamoyl aspartate and inorganic phosphate, the committed step in the de novo pyrimidine nucleotide biosynthesis pathway.</text>
</comment>
<comment type="catalytic activity">
    <reaction evidence="1">
        <text>carbamoyl phosphate + L-aspartate = N-carbamoyl-L-aspartate + phosphate + H(+)</text>
        <dbReference type="Rhea" id="RHEA:20013"/>
        <dbReference type="ChEBI" id="CHEBI:15378"/>
        <dbReference type="ChEBI" id="CHEBI:29991"/>
        <dbReference type="ChEBI" id="CHEBI:32814"/>
        <dbReference type="ChEBI" id="CHEBI:43474"/>
        <dbReference type="ChEBI" id="CHEBI:58228"/>
        <dbReference type="EC" id="2.1.3.2"/>
    </reaction>
</comment>
<comment type="pathway">
    <text evidence="1">Pyrimidine metabolism; UMP biosynthesis via de novo pathway; (S)-dihydroorotate from bicarbonate: step 2/3.</text>
</comment>
<comment type="subunit">
    <text evidence="1">Heterododecamer (2C3:3R2) of six catalytic PyrB chains organized as two trimers (C3), and six regulatory PyrI chains organized as three dimers (R2).</text>
</comment>
<comment type="similarity">
    <text evidence="1">Belongs to the aspartate/ornithine carbamoyltransferase superfamily. ATCase family.</text>
</comment>
<protein>
    <recommendedName>
        <fullName evidence="1">Aspartate carbamoyltransferase catalytic subunit</fullName>
        <ecNumber evidence="1">2.1.3.2</ecNumber>
    </recommendedName>
    <alternativeName>
        <fullName evidence="1">Aspartate transcarbamylase</fullName>
        <shortName evidence="1">ATCase</shortName>
    </alternativeName>
</protein>
<evidence type="ECO:0000255" key="1">
    <source>
        <dbReference type="HAMAP-Rule" id="MF_00001"/>
    </source>
</evidence>
<organism>
    <name type="scientific">Prochlorococcus marinus (strain MIT 9303)</name>
    <dbReference type="NCBI Taxonomy" id="59922"/>
    <lineage>
        <taxon>Bacteria</taxon>
        <taxon>Bacillati</taxon>
        <taxon>Cyanobacteriota</taxon>
        <taxon>Cyanophyceae</taxon>
        <taxon>Synechococcales</taxon>
        <taxon>Prochlorococcaceae</taxon>
        <taxon>Prochlorococcus</taxon>
    </lineage>
</organism>
<sequence length="348" mass="37787">MSGWSHRHILDLASFSLEDYSSVLELAHRFRSMPVTGARKLPALQGRLVATLFFEPSTRTRSSFELAARRLSADVQSFTPASSSLSKGETVLDTARTYVAMGADVLVVRHSSTSVPEQLACALDRSGERTAVLNGGDGLHSHPSQGLLDLYTLAHYFDSQNPLPEALQGKRIVIVGDVLHSRVARSNLWALTACGADVVLCGPPSLVPQDFVAFVEAPPPGQSHDPVQHRGCVEVVRTLEEALPGADAVMTLRLQKERMHQHLLTDLNRFHRDYGLTHERLKLCGKPVPLLHPGPVNRGVELGGSLLDDHSISLVEEQVRNGIPIRMALLYLMAAVESSSDPSLAAIG</sequence>
<gene>
    <name evidence="1" type="primary">pyrB</name>
    <name type="ordered locus">P9303_23931</name>
</gene>
<proteinExistence type="inferred from homology"/>
<name>PYRB_PROM3</name>
<reference key="1">
    <citation type="journal article" date="2007" name="PLoS Genet.">
        <title>Patterns and implications of gene gain and loss in the evolution of Prochlorococcus.</title>
        <authorList>
            <person name="Kettler G.C."/>
            <person name="Martiny A.C."/>
            <person name="Huang K."/>
            <person name="Zucker J."/>
            <person name="Coleman M.L."/>
            <person name="Rodrigue S."/>
            <person name="Chen F."/>
            <person name="Lapidus A."/>
            <person name="Ferriera S."/>
            <person name="Johnson J."/>
            <person name="Steglich C."/>
            <person name="Church G.M."/>
            <person name="Richardson P."/>
            <person name="Chisholm S.W."/>
        </authorList>
    </citation>
    <scope>NUCLEOTIDE SEQUENCE [LARGE SCALE GENOMIC DNA]</scope>
    <source>
        <strain>MIT 9303</strain>
    </source>
</reference>
<feature type="chain" id="PRO_0000301603" description="Aspartate carbamoyltransferase catalytic subunit">
    <location>
        <begin position="1"/>
        <end position="348"/>
    </location>
</feature>
<feature type="binding site" evidence="1">
    <location>
        <position position="59"/>
    </location>
    <ligand>
        <name>carbamoyl phosphate</name>
        <dbReference type="ChEBI" id="CHEBI:58228"/>
    </ligand>
</feature>
<feature type="binding site" evidence="1">
    <location>
        <position position="60"/>
    </location>
    <ligand>
        <name>carbamoyl phosphate</name>
        <dbReference type="ChEBI" id="CHEBI:58228"/>
    </ligand>
</feature>
<feature type="binding site" evidence="1">
    <location>
        <position position="87"/>
    </location>
    <ligand>
        <name>L-aspartate</name>
        <dbReference type="ChEBI" id="CHEBI:29991"/>
    </ligand>
</feature>
<feature type="binding site" evidence="1">
    <location>
        <position position="109"/>
    </location>
    <ligand>
        <name>carbamoyl phosphate</name>
        <dbReference type="ChEBI" id="CHEBI:58228"/>
    </ligand>
</feature>
<feature type="binding site" evidence="1">
    <location>
        <position position="142"/>
    </location>
    <ligand>
        <name>carbamoyl phosphate</name>
        <dbReference type="ChEBI" id="CHEBI:58228"/>
    </ligand>
</feature>
<feature type="binding site" evidence="1">
    <location>
        <position position="145"/>
    </location>
    <ligand>
        <name>carbamoyl phosphate</name>
        <dbReference type="ChEBI" id="CHEBI:58228"/>
    </ligand>
</feature>
<feature type="binding site" evidence="1">
    <location>
        <position position="182"/>
    </location>
    <ligand>
        <name>L-aspartate</name>
        <dbReference type="ChEBI" id="CHEBI:29991"/>
    </ligand>
</feature>
<feature type="binding site" evidence="1">
    <location>
        <position position="253"/>
    </location>
    <ligand>
        <name>L-aspartate</name>
        <dbReference type="ChEBI" id="CHEBI:29991"/>
    </ligand>
</feature>
<feature type="binding site" evidence="1">
    <location>
        <position position="294"/>
    </location>
    <ligand>
        <name>carbamoyl phosphate</name>
        <dbReference type="ChEBI" id="CHEBI:58228"/>
    </ligand>
</feature>
<feature type="binding site" evidence="1">
    <location>
        <position position="295"/>
    </location>
    <ligand>
        <name>carbamoyl phosphate</name>
        <dbReference type="ChEBI" id="CHEBI:58228"/>
    </ligand>
</feature>
<keyword id="KW-0665">Pyrimidine biosynthesis</keyword>
<keyword id="KW-0808">Transferase</keyword>